<organism>
    <name type="scientific">Levilactobacillus brevis (strain ATCC 367 / BCRC 12310 / CIP 105137 / JCM 1170 / LMG 11437 / NCIMB 947 / NCTC 947)</name>
    <name type="common">Lactobacillus brevis</name>
    <dbReference type="NCBI Taxonomy" id="387344"/>
    <lineage>
        <taxon>Bacteria</taxon>
        <taxon>Bacillati</taxon>
        <taxon>Bacillota</taxon>
        <taxon>Bacilli</taxon>
        <taxon>Lactobacillales</taxon>
        <taxon>Lactobacillaceae</taxon>
        <taxon>Levilactobacillus</taxon>
    </lineage>
</organism>
<dbReference type="EC" id="2.1.3.15" evidence="1"/>
<dbReference type="EMBL" id="CP000416">
    <property type="protein sequence ID" value="ABJ64062.1"/>
    <property type="molecule type" value="Genomic_DNA"/>
</dbReference>
<dbReference type="RefSeq" id="WP_011667652.1">
    <property type="nucleotide sequence ID" value="NC_008497.1"/>
</dbReference>
<dbReference type="SMR" id="Q03RW0"/>
<dbReference type="STRING" id="387344.LVIS_0927"/>
<dbReference type="KEGG" id="lbr:LVIS_0927"/>
<dbReference type="PATRIC" id="fig|387344.15.peg.902"/>
<dbReference type="eggNOG" id="COG0777">
    <property type="taxonomic scope" value="Bacteria"/>
</dbReference>
<dbReference type="HOGENOM" id="CLU_015486_1_0_9"/>
<dbReference type="UniPathway" id="UPA00655">
    <property type="reaction ID" value="UER00711"/>
</dbReference>
<dbReference type="Proteomes" id="UP000001652">
    <property type="component" value="Chromosome"/>
</dbReference>
<dbReference type="GO" id="GO:0009317">
    <property type="term" value="C:acetyl-CoA carboxylase complex"/>
    <property type="evidence" value="ECO:0007669"/>
    <property type="project" value="InterPro"/>
</dbReference>
<dbReference type="GO" id="GO:0003989">
    <property type="term" value="F:acetyl-CoA carboxylase activity"/>
    <property type="evidence" value="ECO:0007669"/>
    <property type="project" value="InterPro"/>
</dbReference>
<dbReference type="GO" id="GO:0005524">
    <property type="term" value="F:ATP binding"/>
    <property type="evidence" value="ECO:0007669"/>
    <property type="project" value="UniProtKB-KW"/>
</dbReference>
<dbReference type="GO" id="GO:0016743">
    <property type="term" value="F:carboxyl- or carbamoyltransferase activity"/>
    <property type="evidence" value="ECO:0007669"/>
    <property type="project" value="UniProtKB-UniRule"/>
</dbReference>
<dbReference type="GO" id="GO:0008270">
    <property type="term" value="F:zinc ion binding"/>
    <property type="evidence" value="ECO:0007669"/>
    <property type="project" value="UniProtKB-UniRule"/>
</dbReference>
<dbReference type="GO" id="GO:0006633">
    <property type="term" value="P:fatty acid biosynthetic process"/>
    <property type="evidence" value="ECO:0007669"/>
    <property type="project" value="UniProtKB-KW"/>
</dbReference>
<dbReference type="GO" id="GO:2001295">
    <property type="term" value="P:malonyl-CoA biosynthetic process"/>
    <property type="evidence" value="ECO:0007669"/>
    <property type="project" value="UniProtKB-UniRule"/>
</dbReference>
<dbReference type="Gene3D" id="3.90.226.10">
    <property type="entry name" value="2-enoyl-CoA Hydratase, Chain A, domain 1"/>
    <property type="match status" value="1"/>
</dbReference>
<dbReference type="HAMAP" id="MF_01395">
    <property type="entry name" value="AcetylCoA_CT_beta"/>
    <property type="match status" value="1"/>
</dbReference>
<dbReference type="InterPro" id="IPR034733">
    <property type="entry name" value="AcCoA_carboxyl_beta"/>
</dbReference>
<dbReference type="InterPro" id="IPR000438">
    <property type="entry name" value="Acetyl_CoA_COase_Trfase_b_su"/>
</dbReference>
<dbReference type="InterPro" id="IPR029045">
    <property type="entry name" value="ClpP/crotonase-like_dom_sf"/>
</dbReference>
<dbReference type="InterPro" id="IPR011762">
    <property type="entry name" value="COA_CT_N"/>
</dbReference>
<dbReference type="PANTHER" id="PTHR42995">
    <property type="entry name" value="ACETYL-COENZYME A CARBOXYLASE CARBOXYL TRANSFERASE SUBUNIT BETA, CHLOROPLASTIC"/>
    <property type="match status" value="1"/>
</dbReference>
<dbReference type="PANTHER" id="PTHR42995:SF5">
    <property type="entry name" value="ACETYL-COENZYME A CARBOXYLASE CARBOXYL TRANSFERASE SUBUNIT BETA, CHLOROPLASTIC"/>
    <property type="match status" value="1"/>
</dbReference>
<dbReference type="Pfam" id="PF01039">
    <property type="entry name" value="Carboxyl_trans"/>
    <property type="match status" value="1"/>
</dbReference>
<dbReference type="PRINTS" id="PR01070">
    <property type="entry name" value="ACCCTRFRASEB"/>
</dbReference>
<dbReference type="SUPFAM" id="SSF52096">
    <property type="entry name" value="ClpP/crotonase"/>
    <property type="match status" value="1"/>
</dbReference>
<dbReference type="PROSITE" id="PS50980">
    <property type="entry name" value="COA_CT_NTER"/>
    <property type="match status" value="1"/>
</dbReference>
<gene>
    <name evidence="1" type="primary">accD</name>
    <name type="ordered locus">LVIS_0927</name>
</gene>
<keyword id="KW-0067">ATP-binding</keyword>
<keyword id="KW-0963">Cytoplasm</keyword>
<keyword id="KW-0275">Fatty acid biosynthesis</keyword>
<keyword id="KW-0276">Fatty acid metabolism</keyword>
<keyword id="KW-0444">Lipid biosynthesis</keyword>
<keyword id="KW-0443">Lipid metabolism</keyword>
<keyword id="KW-0479">Metal-binding</keyword>
<keyword id="KW-0547">Nucleotide-binding</keyword>
<keyword id="KW-1185">Reference proteome</keyword>
<keyword id="KW-0808">Transferase</keyword>
<keyword id="KW-0862">Zinc</keyword>
<keyword id="KW-0863">Zinc-finger</keyword>
<evidence type="ECO:0000255" key="1">
    <source>
        <dbReference type="HAMAP-Rule" id="MF_01395"/>
    </source>
</evidence>
<evidence type="ECO:0000255" key="2">
    <source>
        <dbReference type="PROSITE-ProRule" id="PRU01136"/>
    </source>
</evidence>
<name>ACCD_LEVBA</name>
<proteinExistence type="inferred from homology"/>
<feature type="chain" id="PRO_0000389760" description="Acetyl-coenzyme A carboxylase carboxyl transferase subunit beta">
    <location>
        <begin position="1"/>
        <end position="277"/>
    </location>
</feature>
<feature type="domain" description="CoA carboxyltransferase N-terminal" evidence="2">
    <location>
        <begin position="25"/>
        <end position="277"/>
    </location>
</feature>
<feature type="zinc finger region" description="C4-type" evidence="1">
    <location>
        <begin position="29"/>
        <end position="50"/>
    </location>
</feature>
<feature type="binding site" evidence="1">
    <location>
        <position position="29"/>
    </location>
    <ligand>
        <name>Zn(2+)</name>
        <dbReference type="ChEBI" id="CHEBI:29105"/>
    </ligand>
</feature>
<feature type="binding site" evidence="1">
    <location>
        <position position="32"/>
    </location>
    <ligand>
        <name>Zn(2+)</name>
        <dbReference type="ChEBI" id="CHEBI:29105"/>
    </ligand>
</feature>
<feature type="binding site" evidence="1">
    <location>
        <position position="47"/>
    </location>
    <ligand>
        <name>Zn(2+)</name>
        <dbReference type="ChEBI" id="CHEBI:29105"/>
    </ligand>
</feature>
<feature type="binding site" evidence="1">
    <location>
        <position position="50"/>
    </location>
    <ligand>
        <name>Zn(2+)</name>
        <dbReference type="ChEBI" id="CHEBI:29105"/>
    </ligand>
</feature>
<reference key="1">
    <citation type="journal article" date="2006" name="Proc. Natl. Acad. Sci. U.S.A.">
        <title>Comparative genomics of the lactic acid bacteria.</title>
        <authorList>
            <person name="Makarova K.S."/>
            <person name="Slesarev A."/>
            <person name="Wolf Y.I."/>
            <person name="Sorokin A."/>
            <person name="Mirkin B."/>
            <person name="Koonin E.V."/>
            <person name="Pavlov A."/>
            <person name="Pavlova N."/>
            <person name="Karamychev V."/>
            <person name="Polouchine N."/>
            <person name="Shakhova V."/>
            <person name="Grigoriev I."/>
            <person name="Lou Y."/>
            <person name="Rohksar D."/>
            <person name="Lucas S."/>
            <person name="Huang K."/>
            <person name="Goodstein D.M."/>
            <person name="Hawkins T."/>
            <person name="Plengvidhya V."/>
            <person name="Welker D."/>
            <person name="Hughes J."/>
            <person name="Goh Y."/>
            <person name="Benson A."/>
            <person name="Baldwin K."/>
            <person name="Lee J.-H."/>
            <person name="Diaz-Muniz I."/>
            <person name="Dosti B."/>
            <person name="Smeianov V."/>
            <person name="Wechter W."/>
            <person name="Barabote R."/>
            <person name="Lorca G."/>
            <person name="Altermann E."/>
            <person name="Barrangou R."/>
            <person name="Ganesan B."/>
            <person name="Xie Y."/>
            <person name="Rawsthorne H."/>
            <person name="Tamir D."/>
            <person name="Parker C."/>
            <person name="Breidt F."/>
            <person name="Broadbent J.R."/>
            <person name="Hutkins R."/>
            <person name="O'Sullivan D."/>
            <person name="Steele J."/>
            <person name="Unlu G."/>
            <person name="Saier M.H. Jr."/>
            <person name="Klaenhammer T."/>
            <person name="Richardson P."/>
            <person name="Kozyavkin S."/>
            <person name="Weimer B.C."/>
            <person name="Mills D.A."/>
        </authorList>
    </citation>
    <scope>NUCLEOTIDE SEQUENCE [LARGE SCALE GENOMIC DNA]</scope>
    <source>
        <strain>ATCC 367 / BCRC 12310 / CIP 105137 / JCM 1170 / LMG 11437 / NCIMB 947 / NCTC 947</strain>
    </source>
</reference>
<comment type="function">
    <text evidence="1">Component of the acetyl coenzyme A carboxylase (ACC) complex. Biotin carboxylase (BC) catalyzes the carboxylation of biotin on its carrier protein (BCCP) and then the CO(2) group is transferred by the transcarboxylase to acetyl-CoA to form malonyl-CoA.</text>
</comment>
<comment type="catalytic activity">
    <reaction evidence="1">
        <text>N(6)-carboxybiotinyl-L-lysyl-[protein] + acetyl-CoA = N(6)-biotinyl-L-lysyl-[protein] + malonyl-CoA</text>
        <dbReference type="Rhea" id="RHEA:54728"/>
        <dbReference type="Rhea" id="RHEA-COMP:10505"/>
        <dbReference type="Rhea" id="RHEA-COMP:10506"/>
        <dbReference type="ChEBI" id="CHEBI:57288"/>
        <dbReference type="ChEBI" id="CHEBI:57384"/>
        <dbReference type="ChEBI" id="CHEBI:83144"/>
        <dbReference type="ChEBI" id="CHEBI:83145"/>
        <dbReference type="EC" id="2.1.3.15"/>
    </reaction>
</comment>
<comment type="cofactor">
    <cofactor evidence="1">
        <name>Zn(2+)</name>
        <dbReference type="ChEBI" id="CHEBI:29105"/>
    </cofactor>
    <text evidence="1">Binds 1 zinc ion per subunit.</text>
</comment>
<comment type="pathway">
    <text evidence="1">Lipid metabolism; malonyl-CoA biosynthesis; malonyl-CoA from acetyl-CoA: step 1/1.</text>
</comment>
<comment type="subunit">
    <text evidence="1">Acetyl-CoA carboxylase is a heterohexamer composed of biotin carboxyl carrier protein (AccB), biotin carboxylase (AccC) and two subunits each of ACCase subunit alpha (AccA) and ACCase subunit beta (AccD).</text>
</comment>
<comment type="subcellular location">
    <subcellularLocation>
        <location evidence="1">Cytoplasm</location>
    </subcellularLocation>
</comment>
<comment type="similarity">
    <text evidence="1">Belongs to the AccD/PCCB family.</text>
</comment>
<sequence length="277" mass="30265">MLPAKFKTPSQKSLNRRMASIPDGLVRRCPVCHTTFLTDHWEPTRLCPACGYGFRLTAMQRIKLTMDTFQETNAQLTVPDRYTDAAYQAKVARGRQLTGLNESVLTGFGTIDHQSTAIGVMDAFFVMGSLGTATGEKITRLFDEATAKRLPVILFTASGGARMQEGIHSLMQMAKVSAAVARHSQAGLLYIVVLCDPTTGGVTASFAMQGDLILAEPHALVGFAGRRVIEQTIHQTPPADFQRAETVLQHGFIDAIVARPQLKQRLADLLRLHKGES</sequence>
<accession>Q03RW0</accession>
<protein>
    <recommendedName>
        <fullName evidence="1">Acetyl-coenzyme A carboxylase carboxyl transferase subunit beta</fullName>
        <shortName evidence="1">ACCase subunit beta</shortName>
        <shortName evidence="1">Acetyl-CoA carboxylase carboxyltransferase subunit beta</shortName>
        <ecNumber evidence="1">2.1.3.15</ecNumber>
    </recommendedName>
</protein>